<protein>
    <recommendedName>
        <fullName evidence="1">Flap endonuclease 1-2</fullName>
        <shortName evidence="1">FEN-1-2</shortName>
        <ecNumber evidence="1">3.1.-.-</ecNumber>
    </recommendedName>
    <alternativeName>
        <fullName evidence="1">Flap structure-specific endonuclease 1-2</fullName>
    </alternativeName>
</protein>
<dbReference type="EC" id="3.1.-.-" evidence="1"/>
<dbReference type="EMBL" id="CT868219">
    <property type="protein sequence ID" value="CAK75829.1"/>
    <property type="molecule type" value="Genomic_DNA"/>
</dbReference>
<dbReference type="RefSeq" id="XP_001443226.1">
    <property type="nucleotide sequence ID" value="XM_001443189.1"/>
</dbReference>
<dbReference type="SMR" id="A0CYG2"/>
<dbReference type="FunCoup" id="A0CYG2">
    <property type="interactions" value="1328"/>
</dbReference>
<dbReference type="STRING" id="5888.A0CYG2"/>
<dbReference type="EnsemblProtists" id="CAK75829">
    <property type="protein sequence ID" value="CAK75829"/>
    <property type="gene ID" value="GSPATT00011429001"/>
</dbReference>
<dbReference type="GeneID" id="5029011"/>
<dbReference type="KEGG" id="ptm:GSPATT00011429001"/>
<dbReference type="eggNOG" id="KOG2519">
    <property type="taxonomic scope" value="Eukaryota"/>
</dbReference>
<dbReference type="HOGENOM" id="CLU_032444_2_0_1"/>
<dbReference type="InParanoid" id="A0CYG2"/>
<dbReference type="OMA" id="IQEVHID"/>
<dbReference type="OrthoDB" id="1937206at2759"/>
<dbReference type="Proteomes" id="UP000000600">
    <property type="component" value="Partially assembled WGS sequence"/>
</dbReference>
<dbReference type="GO" id="GO:0005739">
    <property type="term" value="C:mitochondrion"/>
    <property type="evidence" value="ECO:0007669"/>
    <property type="project" value="UniProtKB-SubCell"/>
</dbReference>
<dbReference type="GO" id="GO:0005730">
    <property type="term" value="C:nucleolus"/>
    <property type="evidence" value="ECO:0007669"/>
    <property type="project" value="UniProtKB-SubCell"/>
</dbReference>
<dbReference type="GO" id="GO:0005654">
    <property type="term" value="C:nucleoplasm"/>
    <property type="evidence" value="ECO:0007669"/>
    <property type="project" value="UniProtKB-SubCell"/>
</dbReference>
<dbReference type="GO" id="GO:0008409">
    <property type="term" value="F:5'-3' exonuclease activity"/>
    <property type="evidence" value="ECO:0000318"/>
    <property type="project" value="GO_Central"/>
</dbReference>
<dbReference type="GO" id="GO:0017108">
    <property type="term" value="F:5'-flap endonuclease activity"/>
    <property type="evidence" value="ECO:0000318"/>
    <property type="project" value="GO_Central"/>
</dbReference>
<dbReference type="GO" id="GO:0003677">
    <property type="term" value="F:DNA binding"/>
    <property type="evidence" value="ECO:0007669"/>
    <property type="project" value="UniProtKB-UniRule"/>
</dbReference>
<dbReference type="GO" id="GO:0000287">
    <property type="term" value="F:magnesium ion binding"/>
    <property type="evidence" value="ECO:0007669"/>
    <property type="project" value="UniProtKB-UniRule"/>
</dbReference>
<dbReference type="GO" id="GO:0006284">
    <property type="term" value="P:base-excision repair"/>
    <property type="evidence" value="ECO:0007669"/>
    <property type="project" value="UniProtKB-UniRule"/>
</dbReference>
<dbReference type="GO" id="GO:0043137">
    <property type="term" value="P:DNA replication, removal of RNA primer"/>
    <property type="evidence" value="ECO:0007669"/>
    <property type="project" value="UniProtKB-UniRule"/>
</dbReference>
<dbReference type="CDD" id="cd09907">
    <property type="entry name" value="H3TH_FEN1-Euk"/>
    <property type="match status" value="1"/>
</dbReference>
<dbReference type="CDD" id="cd09867">
    <property type="entry name" value="PIN_FEN1"/>
    <property type="match status" value="1"/>
</dbReference>
<dbReference type="FunFam" id="1.10.150.20:FF:000009">
    <property type="entry name" value="Flap endonuclease 1"/>
    <property type="match status" value="1"/>
</dbReference>
<dbReference type="FunFam" id="3.40.50.1010:FF:000138">
    <property type="entry name" value="Flap endonuclease 1-1"/>
    <property type="match status" value="1"/>
</dbReference>
<dbReference type="Gene3D" id="1.10.150.20">
    <property type="entry name" value="5' to 3' exonuclease, C-terminal subdomain"/>
    <property type="match status" value="1"/>
</dbReference>
<dbReference type="Gene3D" id="3.40.50.1010">
    <property type="entry name" value="5'-nuclease"/>
    <property type="match status" value="1"/>
</dbReference>
<dbReference type="HAMAP" id="MF_00614">
    <property type="entry name" value="Fen"/>
    <property type="match status" value="1"/>
</dbReference>
<dbReference type="InterPro" id="IPR036279">
    <property type="entry name" value="5-3_exonuclease_C_sf"/>
</dbReference>
<dbReference type="InterPro" id="IPR023426">
    <property type="entry name" value="Flap_endonuc"/>
</dbReference>
<dbReference type="InterPro" id="IPR008918">
    <property type="entry name" value="HhH2"/>
</dbReference>
<dbReference type="InterPro" id="IPR029060">
    <property type="entry name" value="PIN-like_dom_sf"/>
</dbReference>
<dbReference type="InterPro" id="IPR006086">
    <property type="entry name" value="XPG-I_dom"/>
</dbReference>
<dbReference type="InterPro" id="IPR006084">
    <property type="entry name" value="XPG/Rad2"/>
</dbReference>
<dbReference type="InterPro" id="IPR006085">
    <property type="entry name" value="XPG_DNA_repair_N"/>
</dbReference>
<dbReference type="PANTHER" id="PTHR11081:SF9">
    <property type="entry name" value="FLAP ENDONUCLEASE 1"/>
    <property type="match status" value="1"/>
</dbReference>
<dbReference type="PANTHER" id="PTHR11081">
    <property type="entry name" value="FLAP ENDONUCLEASE FAMILY MEMBER"/>
    <property type="match status" value="1"/>
</dbReference>
<dbReference type="Pfam" id="PF00867">
    <property type="entry name" value="XPG_I"/>
    <property type="match status" value="1"/>
</dbReference>
<dbReference type="Pfam" id="PF00752">
    <property type="entry name" value="XPG_N"/>
    <property type="match status" value="1"/>
</dbReference>
<dbReference type="PRINTS" id="PR00853">
    <property type="entry name" value="XPGRADSUPER"/>
</dbReference>
<dbReference type="SMART" id="SM00279">
    <property type="entry name" value="HhH2"/>
    <property type="match status" value="1"/>
</dbReference>
<dbReference type="SMART" id="SM00484">
    <property type="entry name" value="XPGI"/>
    <property type="match status" value="1"/>
</dbReference>
<dbReference type="SMART" id="SM00485">
    <property type="entry name" value="XPGN"/>
    <property type="match status" value="1"/>
</dbReference>
<dbReference type="SUPFAM" id="SSF47807">
    <property type="entry name" value="5' to 3' exonuclease, C-terminal subdomain"/>
    <property type="match status" value="1"/>
</dbReference>
<dbReference type="SUPFAM" id="SSF88723">
    <property type="entry name" value="PIN domain-like"/>
    <property type="match status" value="1"/>
</dbReference>
<sequence>MGIHQLMQFLKEKAPNCFRTLMLDYFAGRTIGCDASMAMYQFLIQTQSAGLTQIIELTDKEGNRTGHLVGLFNRTLQFLENGIKPVWVFDGKPPLLKSGELARRKKLKEEAKVKTELALEQGDMQQALLQNQRTTTISSIMKEDAIKMLQLMGCPVIIAPCEAEAQCAELCRAGKIYATATEDMDALTFRTPVLLRGFNTKKEPIYEIIYDDMIKELELTYEQFVDLCILCGCDYTEKIEGIGPGTAYKLIKEYKSIEGILEHVQKVNAEREKNNQNPKYTVPSKFLYQDSRELFITPLVQKGDELQLTWNKPDVDNLKKFLIEEKGFAESRIDNGLKRIAKKDPAGFQSRLENFFGKTTKIIHPNNSKAKAKSNKKTEQPQKSGGKKKI</sequence>
<organism>
    <name type="scientific">Paramecium tetraurelia</name>
    <dbReference type="NCBI Taxonomy" id="5888"/>
    <lineage>
        <taxon>Eukaryota</taxon>
        <taxon>Sar</taxon>
        <taxon>Alveolata</taxon>
        <taxon>Ciliophora</taxon>
        <taxon>Intramacronucleata</taxon>
        <taxon>Oligohymenophorea</taxon>
        <taxon>Peniculida</taxon>
        <taxon>Parameciidae</taxon>
        <taxon>Paramecium</taxon>
    </lineage>
</organism>
<reference key="1">
    <citation type="journal article" date="2006" name="Nature">
        <title>Global trends of whole-genome duplications revealed by the ciliate Paramecium tetraurelia.</title>
        <authorList>
            <person name="Aury J.-M."/>
            <person name="Jaillon O."/>
            <person name="Duret L."/>
            <person name="Noel B."/>
            <person name="Jubin C."/>
            <person name="Porcel B.M."/>
            <person name="Segurens B."/>
            <person name="Daubin V."/>
            <person name="Anthouard V."/>
            <person name="Aiach N."/>
            <person name="Arnaiz O."/>
            <person name="Billaut A."/>
            <person name="Beisson J."/>
            <person name="Blanc I."/>
            <person name="Bouhouche K."/>
            <person name="Camara F."/>
            <person name="Duharcourt S."/>
            <person name="Guigo R."/>
            <person name="Gogendeau D."/>
            <person name="Katinka M."/>
            <person name="Keller A.-M."/>
            <person name="Kissmehl R."/>
            <person name="Klotz C."/>
            <person name="Koll F."/>
            <person name="Le Mouel A."/>
            <person name="Lepere G."/>
            <person name="Malinsky S."/>
            <person name="Nowacki M."/>
            <person name="Nowak J.K."/>
            <person name="Plattner H."/>
            <person name="Poulain J."/>
            <person name="Ruiz F."/>
            <person name="Serrano V."/>
            <person name="Zagulski M."/>
            <person name="Dessen P."/>
            <person name="Betermier M."/>
            <person name="Weissenbach J."/>
            <person name="Scarpelli C."/>
            <person name="Schaechter V."/>
            <person name="Sperling L."/>
            <person name="Meyer E."/>
            <person name="Cohen J."/>
            <person name="Wincker P."/>
        </authorList>
    </citation>
    <scope>NUCLEOTIDE SEQUENCE [LARGE SCALE GENOMIC DNA]</scope>
    <source>
        <strain>Stock d4-2</strain>
    </source>
</reference>
<name>FEN12_PARTE</name>
<proteinExistence type="inferred from homology"/>
<keyword id="KW-0227">DNA damage</keyword>
<keyword id="KW-0234">DNA repair</keyword>
<keyword id="KW-0235">DNA replication</keyword>
<keyword id="KW-0255">Endonuclease</keyword>
<keyword id="KW-0269">Exonuclease</keyword>
<keyword id="KW-0378">Hydrolase</keyword>
<keyword id="KW-0460">Magnesium</keyword>
<keyword id="KW-0479">Metal-binding</keyword>
<keyword id="KW-0496">Mitochondrion</keyword>
<keyword id="KW-0540">Nuclease</keyword>
<keyword id="KW-0539">Nucleus</keyword>
<keyword id="KW-0597">Phosphoprotein</keyword>
<keyword id="KW-1185">Reference proteome</keyword>
<feature type="chain" id="PRO_0000403535" description="Flap endonuclease 1-2">
    <location>
        <begin position="1"/>
        <end position="390"/>
    </location>
</feature>
<feature type="region of interest" description="N-domain">
    <location>
        <begin position="1"/>
        <end position="108"/>
    </location>
</feature>
<feature type="region of interest" description="I-domain">
    <location>
        <begin position="126"/>
        <end position="254"/>
    </location>
</feature>
<feature type="region of interest" description="Interaction with PCNA" evidence="1">
    <location>
        <begin position="348"/>
        <end position="356"/>
    </location>
</feature>
<feature type="region of interest" description="Disordered" evidence="2">
    <location>
        <begin position="359"/>
        <end position="390"/>
    </location>
</feature>
<feature type="binding site" evidence="1">
    <location>
        <position position="34"/>
    </location>
    <ligand>
        <name>Mg(2+)</name>
        <dbReference type="ChEBI" id="CHEBI:18420"/>
        <label>1</label>
    </ligand>
</feature>
<feature type="binding site" evidence="1">
    <location>
        <position position="74"/>
    </location>
    <ligand>
        <name>DNA</name>
        <dbReference type="ChEBI" id="CHEBI:16991"/>
    </ligand>
</feature>
<feature type="binding site" evidence="1">
    <location>
        <position position="90"/>
    </location>
    <ligand>
        <name>Mg(2+)</name>
        <dbReference type="ChEBI" id="CHEBI:18420"/>
        <label>1</label>
    </ligand>
</feature>
<feature type="binding site" evidence="1">
    <location>
        <position position="162"/>
    </location>
    <ligand>
        <name>DNA</name>
        <dbReference type="ChEBI" id="CHEBI:16991"/>
    </ligand>
</feature>
<feature type="binding site" evidence="1">
    <location>
        <position position="162"/>
    </location>
    <ligand>
        <name>Mg(2+)</name>
        <dbReference type="ChEBI" id="CHEBI:18420"/>
        <label>1</label>
    </ligand>
</feature>
<feature type="binding site" evidence="1">
    <location>
        <position position="164"/>
    </location>
    <ligand>
        <name>Mg(2+)</name>
        <dbReference type="ChEBI" id="CHEBI:18420"/>
        <label>1</label>
    </ligand>
</feature>
<feature type="binding site" evidence="1">
    <location>
        <position position="183"/>
    </location>
    <ligand>
        <name>Mg(2+)</name>
        <dbReference type="ChEBI" id="CHEBI:18420"/>
        <label>2</label>
    </ligand>
</feature>
<feature type="binding site" evidence="1">
    <location>
        <position position="185"/>
    </location>
    <ligand>
        <name>Mg(2+)</name>
        <dbReference type="ChEBI" id="CHEBI:18420"/>
        <label>2</label>
    </ligand>
</feature>
<feature type="binding site" evidence="1">
    <location>
        <position position="232"/>
    </location>
    <ligand>
        <name>DNA</name>
        <dbReference type="ChEBI" id="CHEBI:16991"/>
    </ligand>
</feature>
<feature type="binding site" evidence="1">
    <location>
        <position position="234"/>
    </location>
    <ligand>
        <name>DNA</name>
        <dbReference type="ChEBI" id="CHEBI:16991"/>
    </ligand>
</feature>
<feature type="binding site" evidence="1">
    <location>
        <position position="234"/>
    </location>
    <ligand>
        <name>Mg(2+)</name>
        <dbReference type="ChEBI" id="CHEBI:18420"/>
        <label>2</label>
    </ligand>
</feature>
<gene>
    <name evidence="1" type="primary">FEN1-2</name>
    <name type="ORF">GSPATT00011429001</name>
</gene>
<comment type="function">
    <text evidence="1">Structure-specific nuclease with 5'-flap endonuclease and 5'-3' exonuclease activities involved in DNA replication and repair. During DNA replication, cleaves the 5'-overhanging flap structure that is generated by displacement synthesis when DNA polymerase encounters the 5'-end of a downstream Okazaki fragment. It enters the flap from the 5'-end and then tracks to cleave the flap base, leaving a nick for ligation. Also involved in the long patch base excision repair (LP-BER) pathway, by cleaving within the apurinic/apyrimidinic (AP) site-terminated flap. Acts as a genome stabilization factor that prevents flaps from equilibrating into structures that lead to duplications and deletions. Also possesses 5'-3' exonuclease activity on nicked or gapped double-stranded DNA, and exhibits RNase H activity. Also involved in replication and repair of rDNA and in repairing mitochondrial DNA.</text>
</comment>
<comment type="cofactor">
    <cofactor evidence="1">
        <name>Mg(2+)</name>
        <dbReference type="ChEBI" id="CHEBI:18420"/>
    </cofactor>
    <text evidence="1">Binds 2 magnesium ions per subunit. They probably participate in the reaction catalyzed by the enzyme. May bind an additional third magnesium ion after substrate binding.</text>
</comment>
<comment type="subunit">
    <text evidence="1">Interacts with PCNA. Three molecules of FEN1 bind to one PCNA trimer with each molecule binding to one PCNA monomer. PCNA stimulates the nuclease activity without altering cleavage specificity.</text>
</comment>
<comment type="subcellular location">
    <subcellularLocation>
        <location evidence="1">Nucleus</location>
        <location evidence="1">Nucleolus</location>
    </subcellularLocation>
    <subcellularLocation>
        <location evidence="1">Nucleus</location>
        <location evidence="1">Nucleoplasm</location>
    </subcellularLocation>
    <subcellularLocation>
        <location evidence="1">Mitochondrion</location>
    </subcellularLocation>
    <text evidence="1">Resides mostly in the nucleoli and relocalizes to the nucleoplasm upon DNA damage.</text>
</comment>
<comment type="PTM">
    <text evidence="1">Phosphorylated. Phosphorylation upon DNA damage induces relocalization to the nuclear plasma.</text>
</comment>
<comment type="similarity">
    <text evidence="1">Belongs to the XPG/RAD2 endonuclease family. FEN1 subfamily.</text>
</comment>
<evidence type="ECO:0000255" key="1">
    <source>
        <dbReference type="HAMAP-Rule" id="MF_03140"/>
    </source>
</evidence>
<evidence type="ECO:0000256" key="2">
    <source>
        <dbReference type="SAM" id="MobiDB-lite"/>
    </source>
</evidence>
<accession>A0CYG2</accession>